<evidence type="ECO:0000255" key="1"/>
<evidence type="ECO:0000305" key="2"/>
<proteinExistence type="inferred from homology"/>
<organism>
    <name type="scientific">Buchnera aphidicola subsp. Acyrthosiphon pisum (strain APS)</name>
    <name type="common">Acyrthosiphon pisum symbiotic bacterium</name>
    <dbReference type="NCBI Taxonomy" id="107806"/>
    <lineage>
        <taxon>Bacteria</taxon>
        <taxon>Pseudomonadati</taxon>
        <taxon>Pseudomonadota</taxon>
        <taxon>Gammaproteobacteria</taxon>
        <taxon>Enterobacterales</taxon>
        <taxon>Erwiniaceae</taxon>
        <taxon>Buchnera</taxon>
    </lineage>
</organism>
<gene>
    <name type="ordered locus">BU123</name>
</gene>
<accession>P57223</accession>
<comment type="subcellular location">
    <subcellularLocation>
        <location evidence="2">Cell membrane</location>
        <topology evidence="2">Multi-pass membrane protein</topology>
    </subcellularLocation>
</comment>
<comment type="similarity">
    <text evidence="2">Belongs to the autoinducer-2 exporter (AI-2E) (TC 2.A.86) family.</text>
</comment>
<name>Y123_BUCAI</name>
<protein>
    <recommendedName>
        <fullName>Putative transport protein BU123</fullName>
    </recommendedName>
</protein>
<reference key="1">
    <citation type="journal article" date="2000" name="Nature">
        <title>Genome sequence of the endocellular bacterial symbiont of aphids Buchnera sp. APS.</title>
        <authorList>
            <person name="Shigenobu S."/>
            <person name="Watanabe H."/>
            <person name="Hattori M."/>
            <person name="Sakaki Y."/>
            <person name="Ishikawa H."/>
        </authorList>
    </citation>
    <scope>NUCLEOTIDE SEQUENCE [LARGE SCALE GENOMIC DNA]</scope>
    <source>
        <strain>APS</strain>
    </source>
</reference>
<keyword id="KW-1003">Cell membrane</keyword>
<keyword id="KW-0472">Membrane</keyword>
<keyword id="KW-1185">Reference proteome</keyword>
<keyword id="KW-0812">Transmembrane</keyword>
<keyword id="KW-1133">Transmembrane helix</keyword>
<keyword id="KW-0813">Transport</keyword>
<feature type="chain" id="PRO_0000148312" description="Putative transport protein BU123">
    <location>
        <begin position="1"/>
        <end position="360"/>
    </location>
</feature>
<feature type="transmembrane region" description="Helical" evidence="1">
    <location>
        <begin position="18"/>
        <end position="38"/>
    </location>
</feature>
<feature type="transmembrane region" description="Helical" evidence="1">
    <location>
        <begin position="39"/>
        <end position="59"/>
    </location>
</feature>
<feature type="transmembrane region" description="Helical" evidence="1">
    <location>
        <begin position="66"/>
        <end position="86"/>
    </location>
</feature>
<feature type="transmembrane region" description="Helical" evidence="1">
    <location>
        <begin position="161"/>
        <end position="181"/>
    </location>
</feature>
<feature type="transmembrane region" description="Helical" evidence="1">
    <location>
        <begin position="204"/>
        <end position="224"/>
    </location>
</feature>
<feature type="transmembrane region" description="Helical" evidence="1">
    <location>
        <begin position="230"/>
        <end position="250"/>
    </location>
</feature>
<feature type="transmembrane region" description="Helical" evidence="1">
    <location>
        <begin position="251"/>
        <end position="271"/>
    </location>
</feature>
<feature type="transmembrane region" description="Helical" evidence="1">
    <location>
        <begin position="280"/>
        <end position="300"/>
    </location>
</feature>
<feature type="transmembrane region" description="Helical" evidence="1">
    <location>
        <begin position="316"/>
        <end position="336"/>
    </location>
</feature>
<dbReference type="EMBL" id="BA000003">
    <property type="protein sequence ID" value="BAB12841.1"/>
    <property type="molecule type" value="Genomic_DNA"/>
</dbReference>
<dbReference type="RefSeq" id="NP_239955.1">
    <property type="nucleotide sequence ID" value="NC_002528.1"/>
</dbReference>
<dbReference type="RefSeq" id="WP_010895959.1">
    <property type="nucleotide sequence ID" value="NC_002528.1"/>
</dbReference>
<dbReference type="SMR" id="P57223"/>
<dbReference type="STRING" id="563178.BUAP5A_121"/>
<dbReference type="EnsemblBacteria" id="BAB12841">
    <property type="protein sequence ID" value="BAB12841"/>
    <property type="gene ID" value="BAB12841"/>
</dbReference>
<dbReference type="KEGG" id="buc:BU123"/>
<dbReference type="PATRIC" id="fig|107806.10.peg.132"/>
<dbReference type="eggNOG" id="COG0628">
    <property type="taxonomic scope" value="Bacteria"/>
</dbReference>
<dbReference type="HOGENOM" id="CLU_041771_1_1_6"/>
<dbReference type="BioCyc" id="BAPH107806:GBZJ-122-MONOMER"/>
<dbReference type="Proteomes" id="UP000001806">
    <property type="component" value="Chromosome"/>
</dbReference>
<dbReference type="GO" id="GO:0005886">
    <property type="term" value="C:plasma membrane"/>
    <property type="evidence" value="ECO:0007669"/>
    <property type="project" value="UniProtKB-SubCell"/>
</dbReference>
<dbReference type="InterPro" id="IPR002549">
    <property type="entry name" value="AI-2E-like"/>
</dbReference>
<dbReference type="NCBIfam" id="NF008216">
    <property type="entry name" value="PRK10983.1"/>
    <property type="match status" value="1"/>
</dbReference>
<dbReference type="PANTHER" id="PTHR21716">
    <property type="entry name" value="TRANSMEMBRANE PROTEIN"/>
    <property type="match status" value="1"/>
</dbReference>
<dbReference type="PANTHER" id="PTHR21716:SF67">
    <property type="entry name" value="TRANSPORT PROTEIN YDIK-RELATED"/>
    <property type="match status" value="1"/>
</dbReference>
<dbReference type="Pfam" id="PF01594">
    <property type="entry name" value="AI-2E_transport"/>
    <property type="match status" value="1"/>
</dbReference>
<sequence>MQNPKEKMDLSQSILSLIFIVSMGVISFLVIHPFILGFFWASMIVIATWPLMLKIQKILGGKRSLAVIIMIIILLLLFIIPVFFLVNSLIATSIPIIHWLGSNDLELPELAWLQNIPLMGRKIFNSYQTLLNSDGGELIHKIRPYMGHATEFFIIQVRNCGLFIVHSILMLFFSALLYWNGEKISISIHHFAYRLSEKNGKAILLLATQAVRAVALGVAVTALIQALLSGIGLLVSGVPYWALLMIIIFFSCLIQLGPLPILIPSIIWLYWNDDTTWGTILLIWSCFVFILDHILRPFFIRIGADLPILLTLSGVIGGLLTFGMIGLFIGPVVLVIFYRLTISWIYGISIASFLENTSLK</sequence>